<comment type="catalytic activity">
    <reaction evidence="2">
        <text>Endohydrolysis of (1-&gt;4)-alpha-D-glucosidic linkages in polysaccharides containing three or more (1-&gt;4)-alpha-linked D-glucose units.</text>
        <dbReference type="EC" id="3.2.1.1"/>
    </reaction>
</comment>
<comment type="cofactor">
    <cofactor evidence="3">
        <name>Ca(2+)</name>
        <dbReference type="ChEBI" id="CHEBI:29108"/>
    </cofactor>
    <text evidence="3">Binds 1 Ca(2+) ion per subunit.</text>
</comment>
<comment type="cofactor">
    <cofactor evidence="3">
        <name>chloride</name>
        <dbReference type="ChEBI" id="CHEBI:17996"/>
    </cofactor>
    <text evidence="3">Binds 1 Cl(-) ion per subunit.</text>
</comment>
<comment type="subunit">
    <text evidence="1">Monomer.</text>
</comment>
<comment type="subcellular location">
    <subcellularLocation>
        <location evidence="5">Secreted</location>
    </subcellularLocation>
</comment>
<comment type="similarity">
    <text evidence="5">Belongs to the glycosyl hydrolase 13 family.</text>
</comment>
<protein>
    <recommendedName>
        <fullName>Alpha-amylase-related protein</fullName>
        <ecNumber evidence="2">3.2.1.1</ecNumber>
    </recommendedName>
</protein>
<sequence>MFKFATAVILCLVAASSTLAQHNPHWWGNRNTIVHLFEWKWSDIAAECENFLGPRGFAGVQVSPVNENIVSAGRPWWERYQPISYKLTTRSGNEKEFADMVRRCNEVGVRIYVDVLLNHMSGDFDGIAVGTAGSEAEPSKKSYPGVPYSALDFHPSCEITDWNDRFQVQQCELVGLKDLDQSSEWVRSKLIEFLDHLIELGVAGFRVDAAKHMAADDLSFIYSSLSDLNIEHGFPHNARPFIFQEVIDHGHETVSREEYNQLGAVTEFRFSEGIGNAFRGNNALKWLQSWGTGWGFLPSGQALTFVDNHDNQRDMGAVLNYKSPKQYKMATAFHLAYPYGISRVMSSFAFDDHDTAPPQDEQEKIISPEFDEEGACVNGWICEHRWRQIYAMVGFKNAVRDTELSNWWDNGDSQISFCRGNKGFLAVNNNLYDLSQELQTCLPAGVYCDVISGSLVDGSCTGKSVTVDDNGYGYAHIGSDDFDGVLALHVDAKV</sequence>
<evidence type="ECO:0000250" key="1"/>
<evidence type="ECO:0000250" key="2">
    <source>
        <dbReference type="UniProtKB" id="P04746"/>
    </source>
</evidence>
<evidence type="ECO:0000250" key="3">
    <source>
        <dbReference type="UniProtKB" id="P56634"/>
    </source>
</evidence>
<evidence type="ECO:0000255" key="4"/>
<evidence type="ECO:0000305" key="5"/>
<feature type="signal peptide" evidence="1">
    <location>
        <begin position="1"/>
        <end position="20"/>
    </location>
</feature>
<feature type="chain" id="PRO_0000001373" description="Alpha-amylase-related protein">
    <location>
        <begin position="21"/>
        <end position="494"/>
    </location>
</feature>
<feature type="active site" description="Nucleophile" evidence="2">
    <location>
        <position position="208"/>
    </location>
</feature>
<feature type="active site" description="Proton donor" evidence="2">
    <location>
        <position position="245"/>
    </location>
</feature>
<feature type="binding site" evidence="3">
    <location>
        <position position="118"/>
    </location>
    <ligand>
        <name>Ca(2+)</name>
        <dbReference type="ChEBI" id="CHEBI:29108"/>
    </ligand>
</feature>
<feature type="binding site" evidence="3">
    <location>
        <position position="169"/>
    </location>
    <ligand>
        <name>Ca(2+)</name>
        <dbReference type="ChEBI" id="CHEBI:29108"/>
    </ligand>
</feature>
<feature type="binding site" evidence="3">
    <location>
        <position position="178"/>
    </location>
    <ligand>
        <name>Ca(2+)</name>
        <dbReference type="ChEBI" id="CHEBI:29108"/>
    </ligand>
</feature>
<feature type="binding site" evidence="3">
    <location>
        <position position="206"/>
    </location>
    <ligand>
        <name>chloride</name>
        <dbReference type="ChEBI" id="CHEBI:17996"/>
    </ligand>
</feature>
<feature type="binding site" evidence="3">
    <location>
        <position position="212"/>
    </location>
    <ligand>
        <name>Ca(2+)</name>
        <dbReference type="ChEBI" id="CHEBI:29108"/>
    </ligand>
</feature>
<feature type="binding site" evidence="3">
    <location>
        <position position="308"/>
    </location>
    <ligand>
        <name>chloride</name>
        <dbReference type="ChEBI" id="CHEBI:17996"/>
    </ligand>
</feature>
<feature type="binding site" evidence="3">
    <location>
        <position position="343"/>
    </location>
    <ligand>
        <name>chloride</name>
        <dbReference type="ChEBI" id="CHEBI:17996"/>
    </ligand>
</feature>
<feature type="site" description="Transition state stabilizer" evidence="2">
    <location>
        <position position="310"/>
    </location>
</feature>
<feature type="modified residue" description="Pyrrolidone carboxylic acid" evidence="1">
    <location>
        <position position="21"/>
    </location>
</feature>
<feature type="disulfide bond" evidence="3">
    <location>
        <begin position="48"/>
        <end position="104"/>
    </location>
</feature>
<feature type="disulfide bond" evidence="3">
    <location>
        <begin position="157"/>
        <end position="171"/>
    </location>
</feature>
<feature type="disulfide bond" evidence="3">
    <location>
        <begin position="376"/>
        <end position="382"/>
    </location>
</feature>
<feature type="disulfide bond" evidence="4">
    <location>
        <begin position="418"/>
        <end position="441"/>
    </location>
</feature>
<feature type="disulfide bond" evidence="3">
    <location>
        <begin position="448"/>
        <end position="460"/>
    </location>
</feature>
<keyword id="KW-0106">Calcium</keyword>
<keyword id="KW-0119">Carbohydrate metabolism</keyword>
<keyword id="KW-0868">Chloride</keyword>
<keyword id="KW-1015">Disulfide bond</keyword>
<keyword id="KW-0326">Glycosidase</keyword>
<keyword id="KW-0378">Hydrolase</keyword>
<keyword id="KW-0479">Metal-binding</keyword>
<keyword id="KW-0873">Pyrrolidone carboxylic acid</keyword>
<keyword id="KW-0964">Secreted</keyword>
<keyword id="KW-0732">Signal</keyword>
<dbReference type="EC" id="3.2.1.1" evidence="2"/>
<dbReference type="EMBL" id="AF136936">
    <property type="protein sequence ID" value="AAF25718.1"/>
    <property type="molecule type" value="Genomic_DNA"/>
</dbReference>
<dbReference type="SMR" id="Q9NJN8"/>
<dbReference type="CAZy" id="GH13">
    <property type="family name" value="Glycoside Hydrolase Family 13"/>
</dbReference>
<dbReference type="GO" id="GO:0005576">
    <property type="term" value="C:extracellular region"/>
    <property type="evidence" value="ECO:0007669"/>
    <property type="project" value="UniProtKB-SubCell"/>
</dbReference>
<dbReference type="GO" id="GO:0004556">
    <property type="term" value="F:alpha-amylase activity"/>
    <property type="evidence" value="ECO:0007669"/>
    <property type="project" value="UniProtKB-EC"/>
</dbReference>
<dbReference type="GO" id="GO:0046872">
    <property type="term" value="F:metal ion binding"/>
    <property type="evidence" value="ECO:0007669"/>
    <property type="project" value="UniProtKB-KW"/>
</dbReference>
<dbReference type="GO" id="GO:0005975">
    <property type="term" value="P:carbohydrate metabolic process"/>
    <property type="evidence" value="ECO:0007669"/>
    <property type="project" value="InterPro"/>
</dbReference>
<dbReference type="CDD" id="cd11317">
    <property type="entry name" value="AmyAc_bac_euk_AmyA"/>
    <property type="match status" value="1"/>
</dbReference>
<dbReference type="FunFam" id="3.20.20.80:FF:000119">
    <property type="entry name" value="Alpha-amylase-related protein"/>
    <property type="match status" value="1"/>
</dbReference>
<dbReference type="FunFam" id="2.60.40.1180:FF:000020">
    <property type="entry name" value="Pancreatic alpha-amylase"/>
    <property type="match status" value="1"/>
</dbReference>
<dbReference type="Gene3D" id="3.20.20.80">
    <property type="entry name" value="Glycosidases"/>
    <property type="match status" value="1"/>
</dbReference>
<dbReference type="Gene3D" id="2.60.40.1180">
    <property type="entry name" value="Golgi alpha-mannosidase II"/>
    <property type="match status" value="1"/>
</dbReference>
<dbReference type="InterPro" id="IPR006048">
    <property type="entry name" value="A-amylase/branching_C"/>
</dbReference>
<dbReference type="InterPro" id="IPR031319">
    <property type="entry name" value="A-amylase_C"/>
</dbReference>
<dbReference type="InterPro" id="IPR006046">
    <property type="entry name" value="Alpha_amylase"/>
</dbReference>
<dbReference type="InterPro" id="IPR006047">
    <property type="entry name" value="Glyco_hydro_13_cat_dom"/>
</dbReference>
<dbReference type="InterPro" id="IPR013780">
    <property type="entry name" value="Glyco_hydro_b"/>
</dbReference>
<dbReference type="InterPro" id="IPR017853">
    <property type="entry name" value="Glycoside_hydrolase_SF"/>
</dbReference>
<dbReference type="PANTHER" id="PTHR43447">
    <property type="entry name" value="ALPHA-AMYLASE"/>
    <property type="match status" value="1"/>
</dbReference>
<dbReference type="Pfam" id="PF00128">
    <property type="entry name" value="Alpha-amylase"/>
    <property type="match status" value="1"/>
</dbReference>
<dbReference type="Pfam" id="PF02806">
    <property type="entry name" value="Alpha-amylase_C"/>
    <property type="match status" value="1"/>
</dbReference>
<dbReference type="PRINTS" id="PR00110">
    <property type="entry name" value="ALPHAAMYLASE"/>
</dbReference>
<dbReference type="SMART" id="SM00642">
    <property type="entry name" value="Aamy"/>
    <property type="match status" value="1"/>
</dbReference>
<dbReference type="SMART" id="SM00632">
    <property type="entry name" value="Aamy_C"/>
    <property type="match status" value="1"/>
</dbReference>
<dbReference type="SUPFAM" id="SSF51445">
    <property type="entry name" value="(Trans)glycosidases"/>
    <property type="match status" value="1"/>
</dbReference>
<dbReference type="SUPFAM" id="SSF51011">
    <property type="entry name" value="Glycosyl hydrolase domain"/>
    <property type="match status" value="1"/>
</dbReference>
<reference key="1">
    <citation type="submission" date="1999-03" db="EMBL/GenBank/DDBJ databases">
        <title>Origin and evolution of the Amyrel gene in Drosophila.</title>
        <authorList>
            <person name="Da Lage J.-L."/>
            <person name="Renard E."/>
            <person name="Chartois F."/>
            <person name="Cariou M.-L."/>
        </authorList>
    </citation>
    <scope>NUCLEOTIDE SEQUENCE [GENOMIC DNA]</scope>
</reference>
<name>AMYR_DROBP</name>
<accession>Q9NJN8</accession>
<gene>
    <name type="primary">Amyrel</name>
</gene>
<proteinExistence type="inferred from homology"/>
<organism>
    <name type="scientific">Drosophila bipectinata</name>
    <name type="common">Fruit fly</name>
    <dbReference type="NCBI Taxonomy" id="42026"/>
    <lineage>
        <taxon>Eukaryota</taxon>
        <taxon>Metazoa</taxon>
        <taxon>Ecdysozoa</taxon>
        <taxon>Arthropoda</taxon>
        <taxon>Hexapoda</taxon>
        <taxon>Insecta</taxon>
        <taxon>Pterygota</taxon>
        <taxon>Neoptera</taxon>
        <taxon>Endopterygota</taxon>
        <taxon>Diptera</taxon>
        <taxon>Brachycera</taxon>
        <taxon>Muscomorpha</taxon>
        <taxon>Ephydroidea</taxon>
        <taxon>Drosophilidae</taxon>
        <taxon>Drosophila</taxon>
        <taxon>Sophophora</taxon>
    </lineage>
</organism>